<gene>
    <name evidence="1" type="primary">trpF</name>
    <name type="ordered locus">SMU_536</name>
</gene>
<protein>
    <recommendedName>
        <fullName evidence="1">N-(5'-phosphoribosyl)anthranilate isomerase</fullName>
        <shortName evidence="1">PRAI</shortName>
        <ecNumber evidence="1">5.3.1.24</ecNumber>
    </recommendedName>
</protein>
<accession>Q8DVF4</accession>
<feature type="chain" id="PRO_0000154385" description="N-(5'-phosphoribosyl)anthranilate isomerase">
    <location>
        <begin position="1"/>
        <end position="193"/>
    </location>
</feature>
<reference key="1">
    <citation type="journal article" date="2002" name="Proc. Natl. Acad. Sci. U.S.A.">
        <title>Genome sequence of Streptococcus mutans UA159, a cariogenic dental pathogen.</title>
        <authorList>
            <person name="Ajdic D.J."/>
            <person name="McShan W.M."/>
            <person name="McLaughlin R.E."/>
            <person name="Savic G."/>
            <person name="Chang J."/>
            <person name="Carson M.B."/>
            <person name="Primeaux C."/>
            <person name="Tian R."/>
            <person name="Kenton S."/>
            <person name="Jia H.G."/>
            <person name="Lin S.P."/>
            <person name="Qian Y."/>
            <person name="Li S."/>
            <person name="Zhu H."/>
            <person name="Najar F.Z."/>
            <person name="Lai H."/>
            <person name="White J."/>
            <person name="Roe B.A."/>
            <person name="Ferretti J.J."/>
        </authorList>
    </citation>
    <scope>NUCLEOTIDE SEQUENCE [LARGE SCALE GENOMIC DNA]</scope>
    <source>
        <strain>ATCC 700610 / UA159</strain>
    </source>
</reference>
<evidence type="ECO:0000255" key="1">
    <source>
        <dbReference type="HAMAP-Rule" id="MF_00135"/>
    </source>
</evidence>
<comment type="catalytic activity">
    <reaction evidence="1">
        <text>N-(5-phospho-beta-D-ribosyl)anthranilate = 1-(2-carboxyphenylamino)-1-deoxy-D-ribulose 5-phosphate</text>
        <dbReference type="Rhea" id="RHEA:21540"/>
        <dbReference type="ChEBI" id="CHEBI:18277"/>
        <dbReference type="ChEBI" id="CHEBI:58613"/>
        <dbReference type="EC" id="5.3.1.24"/>
    </reaction>
</comment>
<comment type="pathway">
    <text evidence="1">Amino-acid biosynthesis; L-tryptophan biosynthesis; L-tryptophan from chorismate: step 3/5.</text>
</comment>
<comment type="similarity">
    <text evidence="1">Belongs to the TrpF family.</text>
</comment>
<dbReference type="EC" id="5.3.1.24" evidence="1"/>
<dbReference type="EMBL" id="AE014133">
    <property type="protein sequence ID" value="AAN58279.1"/>
    <property type="molecule type" value="Genomic_DNA"/>
</dbReference>
<dbReference type="RefSeq" id="NP_720973.1">
    <property type="nucleotide sequence ID" value="NC_004350.2"/>
</dbReference>
<dbReference type="RefSeq" id="WP_002262055.1">
    <property type="nucleotide sequence ID" value="NC_004350.2"/>
</dbReference>
<dbReference type="SMR" id="Q8DVF4"/>
<dbReference type="STRING" id="210007.SMU_536"/>
<dbReference type="KEGG" id="smu:SMU_536"/>
<dbReference type="PATRIC" id="fig|210007.7.peg.473"/>
<dbReference type="eggNOG" id="COG0135">
    <property type="taxonomic scope" value="Bacteria"/>
</dbReference>
<dbReference type="HOGENOM" id="CLU_076364_1_0_9"/>
<dbReference type="OrthoDB" id="9786954at2"/>
<dbReference type="PhylomeDB" id="Q8DVF4"/>
<dbReference type="UniPathway" id="UPA00035">
    <property type="reaction ID" value="UER00042"/>
</dbReference>
<dbReference type="Proteomes" id="UP000002512">
    <property type="component" value="Chromosome"/>
</dbReference>
<dbReference type="GO" id="GO:0004640">
    <property type="term" value="F:phosphoribosylanthranilate isomerase activity"/>
    <property type="evidence" value="ECO:0007669"/>
    <property type="project" value="UniProtKB-UniRule"/>
</dbReference>
<dbReference type="GO" id="GO:0000162">
    <property type="term" value="P:L-tryptophan biosynthetic process"/>
    <property type="evidence" value="ECO:0007669"/>
    <property type="project" value="UniProtKB-UniRule"/>
</dbReference>
<dbReference type="CDD" id="cd00405">
    <property type="entry name" value="PRAI"/>
    <property type="match status" value="1"/>
</dbReference>
<dbReference type="FunFam" id="3.20.20.70:FF:000075">
    <property type="entry name" value="Tryptophan biosynthesis protein TRP1"/>
    <property type="match status" value="1"/>
</dbReference>
<dbReference type="Gene3D" id="3.20.20.70">
    <property type="entry name" value="Aldolase class I"/>
    <property type="match status" value="1"/>
</dbReference>
<dbReference type="HAMAP" id="MF_00135">
    <property type="entry name" value="PRAI"/>
    <property type="match status" value="1"/>
</dbReference>
<dbReference type="InterPro" id="IPR013785">
    <property type="entry name" value="Aldolase_TIM"/>
</dbReference>
<dbReference type="InterPro" id="IPR001240">
    <property type="entry name" value="PRAI_dom"/>
</dbReference>
<dbReference type="InterPro" id="IPR011060">
    <property type="entry name" value="RibuloseP-bd_barrel"/>
</dbReference>
<dbReference type="InterPro" id="IPR044643">
    <property type="entry name" value="TrpF_fam"/>
</dbReference>
<dbReference type="NCBIfam" id="NF002300">
    <property type="entry name" value="PRK01222.1-7"/>
    <property type="match status" value="1"/>
</dbReference>
<dbReference type="PANTHER" id="PTHR42894">
    <property type="entry name" value="N-(5'-PHOSPHORIBOSYL)ANTHRANILATE ISOMERASE"/>
    <property type="match status" value="1"/>
</dbReference>
<dbReference type="PANTHER" id="PTHR42894:SF1">
    <property type="entry name" value="N-(5'-PHOSPHORIBOSYL)ANTHRANILATE ISOMERASE"/>
    <property type="match status" value="1"/>
</dbReference>
<dbReference type="Pfam" id="PF00697">
    <property type="entry name" value="PRAI"/>
    <property type="match status" value="1"/>
</dbReference>
<dbReference type="SUPFAM" id="SSF51366">
    <property type="entry name" value="Ribulose-phoshate binding barrel"/>
    <property type="match status" value="1"/>
</dbReference>
<sequence>MTKVKICGLSTQEAVTAAVSSGADYIGFVFAKSKRQVSLEQAQKLAKMIPEKVKKVGVFVSPTLEELKIAIKTVPLDLVQVHGDYDEDLQTDFSVPLIRAVQIKKGKENLTSKADYLLFDAPIAGSGETFDWQQLETEQLQKPFFIAGGLTSDNVKECIEHFAPYAVDVSSGVETNGRKDIEKIKRFIESVKK</sequence>
<name>TRPF_STRMU</name>
<proteinExistence type="inferred from homology"/>
<keyword id="KW-0028">Amino-acid biosynthesis</keyword>
<keyword id="KW-0057">Aromatic amino acid biosynthesis</keyword>
<keyword id="KW-0413">Isomerase</keyword>
<keyword id="KW-1185">Reference proteome</keyword>
<keyword id="KW-0822">Tryptophan biosynthesis</keyword>
<organism>
    <name type="scientific">Streptococcus mutans serotype c (strain ATCC 700610 / UA159)</name>
    <dbReference type="NCBI Taxonomy" id="210007"/>
    <lineage>
        <taxon>Bacteria</taxon>
        <taxon>Bacillati</taxon>
        <taxon>Bacillota</taxon>
        <taxon>Bacilli</taxon>
        <taxon>Lactobacillales</taxon>
        <taxon>Streptococcaceae</taxon>
        <taxon>Streptococcus</taxon>
    </lineage>
</organism>